<keyword id="KW-0067">ATP-binding</keyword>
<keyword id="KW-0227">DNA damage</keyword>
<keyword id="KW-0234">DNA repair</keyword>
<keyword id="KW-0238">DNA-binding</keyword>
<keyword id="KW-0547">Nucleotide-binding</keyword>
<keyword id="KW-1185">Reference proteome</keyword>
<proteinExistence type="inferred from homology"/>
<comment type="function">
    <text evidence="1">This protein is involved in the repair of mismatches in DNA. It is possible that it carries out the mismatch recognition step. This protein has a weak ATPase activity.</text>
</comment>
<comment type="similarity">
    <text evidence="1">Belongs to the DNA mismatch repair MutS family.</text>
</comment>
<accession>Q8Y093</accession>
<sequence length="882" mass="96264">MAEHSAPALEIDPKYGPFDKHTPMMQQYLKLKSAHPHTLVFYRMGDFYELFFEDAEKAARLLDITLTSRGTTNGQPIRMAGVPFHAVEQYLAKLVKLGESVAICEQIGDPATTKGPVERKVVRVVTPGTLTDAALLSDKVNNHLLAIAQIPGKRGAAPLVGLAWLNLVGGELRLMECSAEQLDRELERIRPAEVLADDATLNAVAFDVARTRLPDWHFDVEAGARRLREQLGVASLVAFGCETLTAALAAAGALLNYAAATQGQSLRHVIGLTVEHESEFIGLDTATRRNLELTETLRGQESPTLFSLLDTCATSMGSRLLRHWLHHPLRDRAVPQARQQAIEVLLAGDWQSLRGTLRTLSDVERITGRLALLSARPRDLSSLRDTLARLPEVRDQLPQSDDAQLLGDLHAALAIPEDAHALLQRAVMAEPAAMVRDGGVIARGYDADLDELRDISENCGQFLVDLEARERERTGIANLRVEYNRVHGFYIEVTNGQAAKVPDDYRRRQTLKNAERYITPELKAFEDKALSAQDRALSREKYLYEDLLQKLLPHLPVLKRIAAALAQADVLATLAERAHALSWSRPALTDAPGIELIRARHPVVEQQVEQFVANDCVLQETRKLLLITGPNMGGKSTFMRQTALVVLLAYVGAFVPADAATIGPIDRIFTRIGAADDLAGGRSTFMVEMTEAAAILHRATPNSLVLMDEIGRGTSTFDGLALAWAIARHLLSHNRSHTLFATHYFELTQLPQEFAQAANVHLSAVEHGDGIVFLHAVQEGPASQSYGLQVAQLAGVPQPVIRAARKRLAWLEQHSADTGATPQLDLFALPSDPSDDDAAEAAAPAAPSALAEALDGIDPDSMTPRDALDALYRLKALSDASA</sequence>
<evidence type="ECO:0000255" key="1">
    <source>
        <dbReference type="HAMAP-Rule" id="MF_00096"/>
    </source>
</evidence>
<organism>
    <name type="scientific">Ralstonia nicotianae (strain ATCC BAA-1114 / GMI1000)</name>
    <name type="common">Ralstonia solanacearum</name>
    <dbReference type="NCBI Taxonomy" id="267608"/>
    <lineage>
        <taxon>Bacteria</taxon>
        <taxon>Pseudomonadati</taxon>
        <taxon>Pseudomonadota</taxon>
        <taxon>Betaproteobacteria</taxon>
        <taxon>Burkholderiales</taxon>
        <taxon>Burkholderiaceae</taxon>
        <taxon>Ralstonia</taxon>
        <taxon>Ralstonia solanacearum species complex</taxon>
    </lineage>
</organism>
<dbReference type="EMBL" id="AL646052">
    <property type="protein sequence ID" value="CAD14853.1"/>
    <property type="molecule type" value="Genomic_DNA"/>
</dbReference>
<dbReference type="RefSeq" id="WP_011001101.1">
    <property type="nucleotide sequence ID" value="NC_003295.1"/>
</dbReference>
<dbReference type="SMR" id="Q8Y093"/>
<dbReference type="STRING" id="267608.RSc1151"/>
<dbReference type="EnsemblBacteria" id="CAD14853">
    <property type="protein sequence ID" value="CAD14853"/>
    <property type="gene ID" value="RSc1151"/>
</dbReference>
<dbReference type="KEGG" id="rso:RSc1151"/>
<dbReference type="eggNOG" id="COG0249">
    <property type="taxonomic scope" value="Bacteria"/>
</dbReference>
<dbReference type="HOGENOM" id="CLU_002472_4_0_4"/>
<dbReference type="Proteomes" id="UP000001436">
    <property type="component" value="Chromosome"/>
</dbReference>
<dbReference type="GO" id="GO:0005829">
    <property type="term" value="C:cytosol"/>
    <property type="evidence" value="ECO:0007669"/>
    <property type="project" value="TreeGrafter"/>
</dbReference>
<dbReference type="GO" id="GO:0005524">
    <property type="term" value="F:ATP binding"/>
    <property type="evidence" value="ECO:0007669"/>
    <property type="project" value="UniProtKB-UniRule"/>
</dbReference>
<dbReference type="GO" id="GO:0140664">
    <property type="term" value="F:ATP-dependent DNA damage sensor activity"/>
    <property type="evidence" value="ECO:0007669"/>
    <property type="project" value="InterPro"/>
</dbReference>
<dbReference type="GO" id="GO:0003684">
    <property type="term" value="F:damaged DNA binding"/>
    <property type="evidence" value="ECO:0007669"/>
    <property type="project" value="UniProtKB-UniRule"/>
</dbReference>
<dbReference type="GO" id="GO:0030983">
    <property type="term" value="F:mismatched DNA binding"/>
    <property type="evidence" value="ECO:0007669"/>
    <property type="project" value="InterPro"/>
</dbReference>
<dbReference type="GO" id="GO:0006298">
    <property type="term" value="P:mismatch repair"/>
    <property type="evidence" value="ECO:0007669"/>
    <property type="project" value="UniProtKB-UniRule"/>
</dbReference>
<dbReference type="CDD" id="cd03284">
    <property type="entry name" value="ABC_MutS1"/>
    <property type="match status" value="1"/>
</dbReference>
<dbReference type="FunFam" id="1.10.1420.10:FF:000001">
    <property type="entry name" value="DNA mismatch repair protein MutS"/>
    <property type="match status" value="1"/>
</dbReference>
<dbReference type="FunFam" id="3.40.1170.10:FF:000001">
    <property type="entry name" value="DNA mismatch repair protein MutS"/>
    <property type="match status" value="1"/>
</dbReference>
<dbReference type="Gene3D" id="1.10.1420.10">
    <property type="match status" value="2"/>
</dbReference>
<dbReference type="Gene3D" id="6.10.140.430">
    <property type="match status" value="1"/>
</dbReference>
<dbReference type="Gene3D" id="3.40.1170.10">
    <property type="entry name" value="DNA repair protein MutS, domain I"/>
    <property type="match status" value="1"/>
</dbReference>
<dbReference type="Gene3D" id="3.30.420.110">
    <property type="entry name" value="MutS, connector domain"/>
    <property type="match status" value="1"/>
</dbReference>
<dbReference type="Gene3D" id="3.40.50.300">
    <property type="entry name" value="P-loop containing nucleotide triphosphate hydrolases"/>
    <property type="match status" value="1"/>
</dbReference>
<dbReference type="HAMAP" id="MF_00096">
    <property type="entry name" value="MutS"/>
    <property type="match status" value="1"/>
</dbReference>
<dbReference type="InterPro" id="IPR005748">
    <property type="entry name" value="DNA_mismatch_repair_MutS"/>
</dbReference>
<dbReference type="InterPro" id="IPR007695">
    <property type="entry name" value="DNA_mismatch_repair_MutS-lik_N"/>
</dbReference>
<dbReference type="InterPro" id="IPR017261">
    <property type="entry name" value="DNA_mismatch_repair_MutS/MSH"/>
</dbReference>
<dbReference type="InterPro" id="IPR000432">
    <property type="entry name" value="DNA_mismatch_repair_MutS_C"/>
</dbReference>
<dbReference type="InterPro" id="IPR007861">
    <property type="entry name" value="DNA_mismatch_repair_MutS_clamp"/>
</dbReference>
<dbReference type="InterPro" id="IPR007696">
    <property type="entry name" value="DNA_mismatch_repair_MutS_core"/>
</dbReference>
<dbReference type="InterPro" id="IPR016151">
    <property type="entry name" value="DNA_mismatch_repair_MutS_N"/>
</dbReference>
<dbReference type="InterPro" id="IPR036187">
    <property type="entry name" value="DNA_mismatch_repair_MutS_sf"/>
</dbReference>
<dbReference type="InterPro" id="IPR007860">
    <property type="entry name" value="DNA_mmatch_repair_MutS_con_dom"/>
</dbReference>
<dbReference type="InterPro" id="IPR045076">
    <property type="entry name" value="MutS"/>
</dbReference>
<dbReference type="InterPro" id="IPR036678">
    <property type="entry name" value="MutS_con_dom_sf"/>
</dbReference>
<dbReference type="InterPro" id="IPR027417">
    <property type="entry name" value="P-loop_NTPase"/>
</dbReference>
<dbReference type="NCBIfam" id="TIGR01070">
    <property type="entry name" value="mutS1"/>
    <property type="match status" value="1"/>
</dbReference>
<dbReference type="NCBIfam" id="NF003810">
    <property type="entry name" value="PRK05399.1"/>
    <property type="match status" value="1"/>
</dbReference>
<dbReference type="PANTHER" id="PTHR11361:SF34">
    <property type="entry name" value="DNA MISMATCH REPAIR PROTEIN MSH1, MITOCHONDRIAL"/>
    <property type="match status" value="1"/>
</dbReference>
<dbReference type="PANTHER" id="PTHR11361">
    <property type="entry name" value="DNA MISMATCH REPAIR PROTEIN MUTS FAMILY MEMBER"/>
    <property type="match status" value="1"/>
</dbReference>
<dbReference type="Pfam" id="PF01624">
    <property type="entry name" value="MutS_I"/>
    <property type="match status" value="1"/>
</dbReference>
<dbReference type="Pfam" id="PF05188">
    <property type="entry name" value="MutS_II"/>
    <property type="match status" value="1"/>
</dbReference>
<dbReference type="Pfam" id="PF05192">
    <property type="entry name" value="MutS_III"/>
    <property type="match status" value="1"/>
</dbReference>
<dbReference type="Pfam" id="PF05190">
    <property type="entry name" value="MutS_IV"/>
    <property type="match status" value="1"/>
</dbReference>
<dbReference type="Pfam" id="PF00488">
    <property type="entry name" value="MutS_V"/>
    <property type="match status" value="1"/>
</dbReference>
<dbReference type="PIRSF" id="PIRSF037677">
    <property type="entry name" value="DNA_mis_repair_Msh6"/>
    <property type="match status" value="1"/>
</dbReference>
<dbReference type="SMART" id="SM00534">
    <property type="entry name" value="MUTSac"/>
    <property type="match status" value="1"/>
</dbReference>
<dbReference type="SMART" id="SM00533">
    <property type="entry name" value="MUTSd"/>
    <property type="match status" value="1"/>
</dbReference>
<dbReference type="SUPFAM" id="SSF55271">
    <property type="entry name" value="DNA repair protein MutS, domain I"/>
    <property type="match status" value="1"/>
</dbReference>
<dbReference type="SUPFAM" id="SSF53150">
    <property type="entry name" value="DNA repair protein MutS, domain II"/>
    <property type="match status" value="1"/>
</dbReference>
<dbReference type="SUPFAM" id="SSF48334">
    <property type="entry name" value="DNA repair protein MutS, domain III"/>
    <property type="match status" value="1"/>
</dbReference>
<dbReference type="SUPFAM" id="SSF52540">
    <property type="entry name" value="P-loop containing nucleoside triphosphate hydrolases"/>
    <property type="match status" value="1"/>
</dbReference>
<dbReference type="PROSITE" id="PS00486">
    <property type="entry name" value="DNA_MISMATCH_REPAIR_2"/>
    <property type="match status" value="1"/>
</dbReference>
<reference key="1">
    <citation type="journal article" date="2002" name="Nature">
        <title>Genome sequence of the plant pathogen Ralstonia solanacearum.</title>
        <authorList>
            <person name="Salanoubat M."/>
            <person name="Genin S."/>
            <person name="Artiguenave F."/>
            <person name="Gouzy J."/>
            <person name="Mangenot S."/>
            <person name="Arlat M."/>
            <person name="Billault A."/>
            <person name="Brottier P."/>
            <person name="Camus J.-C."/>
            <person name="Cattolico L."/>
            <person name="Chandler M."/>
            <person name="Choisne N."/>
            <person name="Claudel-Renard C."/>
            <person name="Cunnac S."/>
            <person name="Demange N."/>
            <person name="Gaspin C."/>
            <person name="Lavie M."/>
            <person name="Moisan A."/>
            <person name="Robert C."/>
            <person name="Saurin W."/>
            <person name="Schiex T."/>
            <person name="Siguier P."/>
            <person name="Thebault P."/>
            <person name="Whalen M."/>
            <person name="Wincker P."/>
            <person name="Levy M."/>
            <person name="Weissenbach J."/>
            <person name="Boucher C.A."/>
        </authorList>
    </citation>
    <scope>NUCLEOTIDE SEQUENCE [LARGE SCALE GENOMIC DNA]</scope>
    <source>
        <strain>ATCC BAA-1114 / GMI1000</strain>
    </source>
</reference>
<name>MUTS_RALN1</name>
<feature type="chain" id="PRO_0000115124" description="DNA mismatch repair protein MutS">
    <location>
        <begin position="1"/>
        <end position="882"/>
    </location>
</feature>
<feature type="binding site" evidence="1">
    <location>
        <begin position="629"/>
        <end position="636"/>
    </location>
    <ligand>
        <name>ATP</name>
        <dbReference type="ChEBI" id="CHEBI:30616"/>
    </ligand>
</feature>
<gene>
    <name evidence="1" type="primary">mutS</name>
    <name type="ordered locus">RSc1151</name>
    <name type="ORF">RS04600</name>
</gene>
<protein>
    <recommendedName>
        <fullName evidence="1">DNA mismatch repair protein MutS</fullName>
    </recommendedName>
</protein>